<organism>
    <name type="scientific">Pseudarthrobacter chlorophenolicus (strain ATCC 700700 / DSM 12829 / CIP 107037 / JCM 12360 / KCTC 9906 / NCIMB 13794 / A6)</name>
    <name type="common">Arthrobacter chlorophenolicus</name>
    <dbReference type="NCBI Taxonomy" id="452863"/>
    <lineage>
        <taxon>Bacteria</taxon>
        <taxon>Bacillati</taxon>
        <taxon>Actinomycetota</taxon>
        <taxon>Actinomycetes</taxon>
        <taxon>Micrococcales</taxon>
        <taxon>Micrococcaceae</taxon>
        <taxon>Pseudarthrobacter</taxon>
    </lineage>
</organism>
<protein>
    <recommendedName>
        <fullName evidence="1">Small ribosomal subunit protein uS7</fullName>
    </recommendedName>
    <alternativeName>
        <fullName evidence="2">30S ribosomal protein S7</fullName>
    </alternativeName>
</protein>
<reference key="1">
    <citation type="submission" date="2009-01" db="EMBL/GenBank/DDBJ databases">
        <title>Complete sequence of chromosome of Arthrobacter chlorophenolicus A6.</title>
        <authorList>
            <consortium name="US DOE Joint Genome Institute"/>
            <person name="Lucas S."/>
            <person name="Copeland A."/>
            <person name="Lapidus A."/>
            <person name="Glavina del Rio T."/>
            <person name="Tice H."/>
            <person name="Bruce D."/>
            <person name="Goodwin L."/>
            <person name="Pitluck S."/>
            <person name="Goltsman E."/>
            <person name="Clum A."/>
            <person name="Larimer F."/>
            <person name="Land M."/>
            <person name="Hauser L."/>
            <person name="Kyrpides N."/>
            <person name="Mikhailova N."/>
            <person name="Jansson J."/>
            <person name="Richardson P."/>
        </authorList>
    </citation>
    <scope>NUCLEOTIDE SEQUENCE [LARGE SCALE GENOMIC DNA]</scope>
    <source>
        <strain>ATCC 700700 / DSM 12829 / CIP 107037 / JCM 12360 / KCTC 9906 / NCIMB 13794 / A6</strain>
    </source>
</reference>
<evidence type="ECO:0000255" key="1">
    <source>
        <dbReference type="HAMAP-Rule" id="MF_00480"/>
    </source>
</evidence>
<evidence type="ECO:0000305" key="2"/>
<comment type="function">
    <text evidence="1">One of the primary rRNA binding proteins, it binds directly to 16S rRNA where it nucleates assembly of the head domain of the 30S subunit. Is located at the subunit interface close to the decoding center, probably blocks exit of the E-site tRNA.</text>
</comment>
<comment type="subunit">
    <text evidence="1">Part of the 30S ribosomal subunit. Contacts proteins S9 and S11.</text>
</comment>
<comment type="similarity">
    <text evidence="1">Belongs to the universal ribosomal protein uS7 family.</text>
</comment>
<feature type="chain" id="PRO_1000135576" description="Small ribosomal subunit protein uS7">
    <location>
        <begin position="1"/>
        <end position="156"/>
    </location>
</feature>
<dbReference type="EMBL" id="CP001341">
    <property type="protein sequence ID" value="ACL40659.1"/>
    <property type="molecule type" value="Genomic_DNA"/>
</dbReference>
<dbReference type="RefSeq" id="WP_013601837.1">
    <property type="nucleotide sequence ID" value="NC_011886.1"/>
</dbReference>
<dbReference type="SMR" id="B8HD13"/>
<dbReference type="STRING" id="452863.Achl_2694"/>
<dbReference type="KEGG" id="ach:Achl_2694"/>
<dbReference type="eggNOG" id="COG0049">
    <property type="taxonomic scope" value="Bacteria"/>
</dbReference>
<dbReference type="HOGENOM" id="CLU_072226_1_1_11"/>
<dbReference type="OrthoDB" id="9807653at2"/>
<dbReference type="Proteomes" id="UP000002505">
    <property type="component" value="Chromosome"/>
</dbReference>
<dbReference type="GO" id="GO:0015935">
    <property type="term" value="C:small ribosomal subunit"/>
    <property type="evidence" value="ECO:0007669"/>
    <property type="project" value="InterPro"/>
</dbReference>
<dbReference type="GO" id="GO:0019843">
    <property type="term" value="F:rRNA binding"/>
    <property type="evidence" value="ECO:0007669"/>
    <property type="project" value="UniProtKB-UniRule"/>
</dbReference>
<dbReference type="GO" id="GO:0003735">
    <property type="term" value="F:structural constituent of ribosome"/>
    <property type="evidence" value="ECO:0007669"/>
    <property type="project" value="InterPro"/>
</dbReference>
<dbReference type="GO" id="GO:0000049">
    <property type="term" value="F:tRNA binding"/>
    <property type="evidence" value="ECO:0007669"/>
    <property type="project" value="UniProtKB-UniRule"/>
</dbReference>
<dbReference type="GO" id="GO:0006412">
    <property type="term" value="P:translation"/>
    <property type="evidence" value="ECO:0007669"/>
    <property type="project" value="UniProtKB-UniRule"/>
</dbReference>
<dbReference type="CDD" id="cd14869">
    <property type="entry name" value="uS7_Bacteria"/>
    <property type="match status" value="1"/>
</dbReference>
<dbReference type="FunFam" id="1.10.455.10:FF:000001">
    <property type="entry name" value="30S ribosomal protein S7"/>
    <property type="match status" value="1"/>
</dbReference>
<dbReference type="Gene3D" id="1.10.455.10">
    <property type="entry name" value="Ribosomal protein S7 domain"/>
    <property type="match status" value="1"/>
</dbReference>
<dbReference type="HAMAP" id="MF_00480_B">
    <property type="entry name" value="Ribosomal_uS7_B"/>
    <property type="match status" value="1"/>
</dbReference>
<dbReference type="InterPro" id="IPR000235">
    <property type="entry name" value="Ribosomal_uS7"/>
</dbReference>
<dbReference type="InterPro" id="IPR005717">
    <property type="entry name" value="Ribosomal_uS7_bac/org-type"/>
</dbReference>
<dbReference type="InterPro" id="IPR020606">
    <property type="entry name" value="Ribosomal_uS7_CS"/>
</dbReference>
<dbReference type="InterPro" id="IPR023798">
    <property type="entry name" value="Ribosomal_uS7_dom"/>
</dbReference>
<dbReference type="InterPro" id="IPR036823">
    <property type="entry name" value="Ribosomal_uS7_dom_sf"/>
</dbReference>
<dbReference type="NCBIfam" id="TIGR01029">
    <property type="entry name" value="rpsG_bact"/>
    <property type="match status" value="1"/>
</dbReference>
<dbReference type="PANTHER" id="PTHR11205">
    <property type="entry name" value="RIBOSOMAL PROTEIN S7"/>
    <property type="match status" value="1"/>
</dbReference>
<dbReference type="Pfam" id="PF00177">
    <property type="entry name" value="Ribosomal_S7"/>
    <property type="match status" value="1"/>
</dbReference>
<dbReference type="PIRSF" id="PIRSF002122">
    <property type="entry name" value="RPS7p_RPS7a_RPS5e_RPS7o"/>
    <property type="match status" value="1"/>
</dbReference>
<dbReference type="SUPFAM" id="SSF47973">
    <property type="entry name" value="Ribosomal protein S7"/>
    <property type="match status" value="1"/>
</dbReference>
<dbReference type="PROSITE" id="PS00052">
    <property type="entry name" value="RIBOSOMAL_S7"/>
    <property type="match status" value="1"/>
</dbReference>
<sequence length="156" mass="17135">MPRKGPAPKRPLVQDPVYGSPLVTQLINKVLVDGKKSTAERIVYGALEGARAKSGGDPVAALKKAMDNVKPSLEVRSRRVGGATYQVPVEVKPGRSTALALRWLVGYSKARREKTMTERLQNEILDASNGLGAAVKRREDTHKMAESNKAFAHYRW</sequence>
<proteinExistence type="inferred from homology"/>
<gene>
    <name evidence="1" type="primary">rpsG</name>
    <name type="ordered locus">Achl_2694</name>
</gene>
<name>RS7_PSECP</name>
<accession>B8HD13</accession>
<keyword id="KW-0687">Ribonucleoprotein</keyword>
<keyword id="KW-0689">Ribosomal protein</keyword>
<keyword id="KW-0694">RNA-binding</keyword>
<keyword id="KW-0699">rRNA-binding</keyword>
<keyword id="KW-0820">tRNA-binding</keyword>